<dbReference type="EC" id="4.6.1.2" evidence="1"/>
<dbReference type="EMBL" id="BX284602">
    <property type="protein sequence ID" value="CCD68450.2"/>
    <property type="molecule type" value="Genomic_DNA"/>
</dbReference>
<dbReference type="PIR" id="T32074">
    <property type="entry name" value="T32074"/>
</dbReference>
<dbReference type="RefSeq" id="NP_001364740.1">
    <property type="nucleotide sequence ID" value="NM_001377729.2"/>
</dbReference>
<dbReference type="RefSeq" id="NP_494324.1">
    <property type="nucleotide sequence ID" value="NM_061923.1"/>
</dbReference>
<dbReference type="SMR" id="O16715"/>
<dbReference type="FunCoup" id="O16715">
    <property type="interactions" value="81"/>
</dbReference>
<dbReference type="STRING" id="6239.F22E5.3.1"/>
<dbReference type="GlyCosmos" id="O16715">
    <property type="glycosylation" value="2 sites, No reported glycans"/>
</dbReference>
<dbReference type="PaxDb" id="6239-F22E5.3"/>
<dbReference type="EnsemblMetazoa" id="F22E5.3.1">
    <property type="protein sequence ID" value="F22E5.3.1"/>
    <property type="gene ID" value="WBGene00001546"/>
</dbReference>
<dbReference type="GeneID" id="191651"/>
<dbReference type="UCSC" id="F22E5.3">
    <property type="organism name" value="c. elegans"/>
</dbReference>
<dbReference type="AGR" id="WB:WBGene00001546"/>
<dbReference type="WormBase" id="F22E5.3">
    <property type="protein sequence ID" value="CE53918"/>
    <property type="gene ID" value="WBGene00001546"/>
    <property type="gene designation" value="gcy-21"/>
</dbReference>
<dbReference type="eggNOG" id="KOG1023">
    <property type="taxonomic scope" value="Eukaryota"/>
</dbReference>
<dbReference type="GeneTree" id="ENSGT00970000196266"/>
<dbReference type="HOGENOM" id="CLU_001072_1_2_1"/>
<dbReference type="InParanoid" id="O16715"/>
<dbReference type="OrthoDB" id="1890790at2759"/>
<dbReference type="PhylomeDB" id="O16715"/>
<dbReference type="Reactome" id="R-CEL-2514859">
    <property type="pathway name" value="Inactivation, recovery and regulation of the phototransduction cascade"/>
</dbReference>
<dbReference type="PRO" id="PR:O16715"/>
<dbReference type="Proteomes" id="UP000001940">
    <property type="component" value="Chromosome II"/>
</dbReference>
<dbReference type="Bgee" id="WBGene00001546">
    <property type="expression patterns" value="Expressed in embryo and 2 other cell types or tissues"/>
</dbReference>
<dbReference type="GO" id="GO:0005886">
    <property type="term" value="C:plasma membrane"/>
    <property type="evidence" value="ECO:0000318"/>
    <property type="project" value="GO_Central"/>
</dbReference>
<dbReference type="GO" id="GO:0005524">
    <property type="term" value="F:ATP binding"/>
    <property type="evidence" value="ECO:0007669"/>
    <property type="project" value="UniProtKB-KW"/>
</dbReference>
<dbReference type="GO" id="GO:0005525">
    <property type="term" value="F:GTP binding"/>
    <property type="evidence" value="ECO:0007669"/>
    <property type="project" value="UniProtKB-KW"/>
</dbReference>
<dbReference type="GO" id="GO:0004383">
    <property type="term" value="F:guanylate cyclase activity"/>
    <property type="evidence" value="ECO:0000318"/>
    <property type="project" value="GO_Central"/>
</dbReference>
<dbReference type="GO" id="GO:0001653">
    <property type="term" value="F:peptide receptor activity"/>
    <property type="evidence" value="ECO:0000318"/>
    <property type="project" value="GO_Central"/>
</dbReference>
<dbReference type="GO" id="GO:0004672">
    <property type="term" value="F:protein kinase activity"/>
    <property type="evidence" value="ECO:0007669"/>
    <property type="project" value="InterPro"/>
</dbReference>
<dbReference type="GO" id="GO:0006182">
    <property type="term" value="P:cGMP biosynthetic process"/>
    <property type="evidence" value="ECO:0000318"/>
    <property type="project" value="GO_Central"/>
</dbReference>
<dbReference type="GO" id="GO:0035556">
    <property type="term" value="P:intracellular signal transduction"/>
    <property type="evidence" value="ECO:0007669"/>
    <property type="project" value="InterPro"/>
</dbReference>
<dbReference type="GO" id="GO:0007168">
    <property type="term" value="P:receptor guanylyl cyclase signaling pathway"/>
    <property type="evidence" value="ECO:0000318"/>
    <property type="project" value="GO_Central"/>
</dbReference>
<dbReference type="CDD" id="cd07302">
    <property type="entry name" value="CHD"/>
    <property type="match status" value="1"/>
</dbReference>
<dbReference type="CDD" id="cd13992">
    <property type="entry name" value="PK_GC"/>
    <property type="match status" value="1"/>
</dbReference>
<dbReference type="FunFam" id="1.10.510.10:FF:001055">
    <property type="entry name" value="Guanylate cyclase"/>
    <property type="match status" value="1"/>
</dbReference>
<dbReference type="FunFam" id="3.30.70.1230:FF:000105">
    <property type="entry name" value="Receptor-type guanylate cyclase gcy-21"/>
    <property type="match status" value="1"/>
</dbReference>
<dbReference type="FunFam" id="3.40.50.2300:FF:000683">
    <property type="entry name" value="Receptor-type guanylate cyclase gcy-21"/>
    <property type="match status" value="1"/>
</dbReference>
<dbReference type="Gene3D" id="3.40.50.2300">
    <property type="match status" value="2"/>
</dbReference>
<dbReference type="Gene3D" id="3.30.70.1230">
    <property type="entry name" value="Nucleotide cyclase"/>
    <property type="match status" value="1"/>
</dbReference>
<dbReference type="Gene3D" id="1.10.510.10">
    <property type="entry name" value="Transferase(Phosphotransferase) domain 1"/>
    <property type="match status" value="1"/>
</dbReference>
<dbReference type="InterPro" id="IPR001054">
    <property type="entry name" value="A/G_cyclase"/>
</dbReference>
<dbReference type="InterPro" id="IPR018297">
    <property type="entry name" value="A/G_cyclase_CS"/>
</dbReference>
<dbReference type="InterPro" id="IPR001828">
    <property type="entry name" value="ANF_lig-bd_rcpt"/>
</dbReference>
<dbReference type="InterPro" id="IPR050401">
    <property type="entry name" value="Cyclic_nucleotide_synthase"/>
</dbReference>
<dbReference type="InterPro" id="IPR011009">
    <property type="entry name" value="Kinase-like_dom_sf"/>
</dbReference>
<dbReference type="InterPro" id="IPR029787">
    <property type="entry name" value="Nucleotide_cyclase"/>
</dbReference>
<dbReference type="InterPro" id="IPR028082">
    <property type="entry name" value="Peripla_BP_I"/>
</dbReference>
<dbReference type="InterPro" id="IPR000719">
    <property type="entry name" value="Prot_kinase_dom"/>
</dbReference>
<dbReference type="InterPro" id="IPR001245">
    <property type="entry name" value="Ser-Thr/Tyr_kinase_cat_dom"/>
</dbReference>
<dbReference type="PANTHER" id="PTHR11920">
    <property type="entry name" value="GUANYLYL CYCLASE"/>
    <property type="match status" value="1"/>
</dbReference>
<dbReference type="PANTHER" id="PTHR11920:SF436">
    <property type="entry name" value="RECEPTOR-TYPE GUANYLATE CYCLASE GCY-15-RELATED"/>
    <property type="match status" value="1"/>
</dbReference>
<dbReference type="Pfam" id="PF01094">
    <property type="entry name" value="ANF_receptor"/>
    <property type="match status" value="1"/>
</dbReference>
<dbReference type="Pfam" id="PF00211">
    <property type="entry name" value="Guanylate_cyc"/>
    <property type="match status" value="1"/>
</dbReference>
<dbReference type="Pfam" id="PF07714">
    <property type="entry name" value="PK_Tyr_Ser-Thr"/>
    <property type="match status" value="1"/>
</dbReference>
<dbReference type="SMART" id="SM00044">
    <property type="entry name" value="CYCc"/>
    <property type="match status" value="1"/>
</dbReference>
<dbReference type="SUPFAM" id="SSF55073">
    <property type="entry name" value="Nucleotide cyclase"/>
    <property type="match status" value="1"/>
</dbReference>
<dbReference type="SUPFAM" id="SSF53822">
    <property type="entry name" value="Periplasmic binding protein-like I"/>
    <property type="match status" value="1"/>
</dbReference>
<dbReference type="SUPFAM" id="SSF56112">
    <property type="entry name" value="Protein kinase-like (PK-like)"/>
    <property type="match status" value="1"/>
</dbReference>
<dbReference type="PROSITE" id="PS00452">
    <property type="entry name" value="GUANYLATE_CYCLASE_1"/>
    <property type="match status" value="1"/>
</dbReference>
<dbReference type="PROSITE" id="PS50125">
    <property type="entry name" value="GUANYLATE_CYCLASE_2"/>
    <property type="match status" value="1"/>
</dbReference>
<dbReference type="PROSITE" id="PS50011">
    <property type="entry name" value="PROTEIN_KINASE_DOM"/>
    <property type="match status" value="1"/>
</dbReference>
<accession>O16715</accession>
<proteinExistence type="evidence at transcript level"/>
<organism evidence="9">
    <name type="scientific">Caenorhabditis elegans</name>
    <dbReference type="NCBI Taxonomy" id="6239"/>
    <lineage>
        <taxon>Eukaryota</taxon>
        <taxon>Metazoa</taxon>
        <taxon>Ecdysozoa</taxon>
        <taxon>Nematoda</taxon>
        <taxon>Chromadorea</taxon>
        <taxon>Rhabditida</taxon>
        <taxon>Rhabditina</taxon>
        <taxon>Rhabditomorpha</taxon>
        <taxon>Rhabditoidea</taxon>
        <taxon>Rhabditidae</taxon>
        <taxon>Peloderinae</taxon>
        <taxon>Caenorhabditis</taxon>
    </lineage>
</organism>
<comment type="function">
    <text evidence="1 7">Guanylate cyclase involved in the production of the second messenger cGMP (By similarity). Plays a role in dauer formation (PubMed:32452127).</text>
</comment>
<comment type="catalytic activity">
    <reaction evidence="1">
        <text>GTP = 3',5'-cyclic GMP + diphosphate</text>
        <dbReference type="Rhea" id="RHEA:13665"/>
        <dbReference type="ChEBI" id="CHEBI:33019"/>
        <dbReference type="ChEBI" id="CHEBI:37565"/>
        <dbReference type="ChEBI" id="CHEBI:57746"/>
        <dbReference type="EC" id="4.6.1.2"/>
    </reaction>
</comment>
<comment type="subcellular location">
    <subcellularLocation>
        <location evidence="8">Cell membrane</location>
        <topology evidence="8">Single-pass type I membrane protein</topology>
    </subcellularLocation>
</comment>
<comment type="tissue specificity">
    <text evidence="6">Expressed in ASG sensory neurons.</text>
</comment>
<comment type="domain">
    <text evidence="4">The protein kinase domain is predicted to be catalytically inactive.</text>
</comment>
<comment type="similarity">
    <text evidence="3">Belongs to the adenylyl cyclase class-4/guanylyl cyclase family.</text>
</comment>
<protein>
    <recommendedName>
        <fullName evidence="8">Receptor-type guanylate cyclase gcy-21</fullName>
        <ecNumber evidence="1">4.6.1.2</ecNumber>
    </recommendedName>
</protein>
<keyword id="KW-0067">ATP-binding</keyword>
<keyword id="KW-1003">Cell membrane</keyword>
<keyword id="KW-0141">cGMP biosynthesis</keyword>
<keyword id="KW-0175">Coiled coil</keyword>
<keyword id="KW-0325">Glycoprotein</keyword>
<keyword id="KW-0342">GTP-binding</keyword>
<keyword id="KW-0456">Lyase</keyword>
<keyword id="KW-0472">Membrane</keyword>
<keyword id="KW-0547">Nucleotide-binding</keyword>
<keyword id="KW-0675">Receptor</keyword>
<keyword id="KW-1185">Reference proteome</keyword>
<keyword id="KW-0732">Signal</keyword>
<keyword id="KW-0812">Transmembrane</keyword>
<keyword id="KW-1133">Transmembrane helix</keyword>
<gene>
    <name evidence="10" type="primary">gcy-21</name>
    <name evidence="10" type="ORF">F22E5.3</name>
</gene>
<feature type="signal peptide" evidence="2">
    <location>
        <begin position="1"/>
        <end position="17"/>
    </location>
</feature>
<feature type="chain" id="PRO_0000433290" description="Receptor-type guanylate cyclase gcy-21" evidence="2">
    <location>
        <begin position="18"/>
        <end position="1163"/>
    </location>
</feature>
<feature type="topological domain" description="Extracellular" evidence="2">
    <location>
        <begin position="18"/>
        <end position="490"/>
    </location>
</feature>
<feature type="transmembrane region" description="Helical" evidence="2">
    <location>
        <begin position="491"/>
        <end position="511"/>
    </location>
</feature>
<feature type="topological domain" description="Cytoplasmic" evidence="2">
    <location>
        <begin position="512"/>
        <end position="1163"/>
    </location>
</feature>
<feature type="domain" description="Protein kinase" evidence="4">
    <location>
        <begin position="587"/>
        <end position="882"/>
    </location>
</feature>
<feature type="domain" description="Guanylate cyclase" evidence="3">
    <location>
        <begin position="953"/>
        <end position="1083"/>
    </location>
</feature>
<feature type="coiled-coil region" evidence="2">
    <location>
        <begin position="901"/>
        <end position="930"/>
    </location>
</feature>
<feature type="binding site" evidence="4">
    <location>
        <begin position="593"/>
        <end position="601"/>
    </location>
    <ligand>
        <name>ATP</name>
        <dbReference type="ChEBI" id="CHEBI:30616"/>
    </ligand>
</feature>
<feature type="binding site" evidence="4">
    <location>
        <position position="635"/>
    </location>
    <ligand>
        <name>ATP</name>
        <dbReference type="ChEBI" id="CHEBI:30616"/>
    </ligand>
</feature>
<feature type="glycosylation site" description="N-linked (GlcNAc...) asparagine" evidence="5">
    <location>
        <position position="102"/>
    </location>
</feature>
<feature type="glycosylation site" description="N-linked (GlcNAc...) asparagine" evidence="5">
    <location>
        <position position="296"/>
    </location>
</feature>
<feature type="glycosylation site" description="N-linked (GlcNAc...) asparagine" evidence="5">
    <location>
        <position position="322"/>
    </location>
</feature>
<feature type="glycosylation site" description="N-linked (GlcNAc...) asparagine" evidence="5">
    <location>
        <position position="346"/>
    </location>
</feature>
<feature type="glycosylation site" description="N-linked (GlcNAc...) asparagine" evidence="5">
    <location>
        <position position="466"/>
    </location>
</feature>
<feature type="glycosylation site" description="N-linked (GlcNAc...) asparagine" evidence="5">
    <location>
        <position position="488"/>
    </location>
</feature>
<reference evidence="9" key="1">
    <citation type="journal article" date="1998" name="Science">
        <title>Genome sequence of the nematode C. elegans: a platform for investigating biology.</title>
        <authorList>
            <consortium name="The C. elegans sequencing consortium"/>
        </authorList>
    </citation>
    <scope>NUCLEOTIDE SEQUENCE [LARGE SCALE GENOMIC DNA]</scope>
    <source>
        <strain evidence="9">Bristol N2</strain>
    </source>
</reference>
<reference evidence="8" key="2">
    <citation type="journal article" date="2006" name="Genetics">
        <title>Searching for neuronal left/right asymmetry: genomewide analysis of nematode receptor-type guanylyl cyclases.</title>
        <authorList>
            <person name="Ortiz C.O."/>
            <person name="Etchberger J.F."/>
            <person name="Posy S.L."/>
            <person name="Frokjaer-Jensen C."/>
            <person name="Lockery S."/>
            <person name="Honig B."/>
            <person name="Hobert O."/>
        </authorList>
    </citation>
    <scope>TISSUE SPECIFICITY</scope>
</reference>
<reference key="3">
    <citation type="journal article" date="2020" name="Cell Prolif.">
        <title>An approach using Caenorhabditis elegans screening novel targets to suppress tumour cell proliferation.</title>
        <authorList>
            <person name="Mao Y.Q."/>
            <person name="Han S.F."/>
            <person name="Zhang S.L."/>
            <person name="Zhang Z.Y."/>
            <person name="Kong C.Y."/>
            <person name="Chen H.L."/>
            <person name="Li Z.M."/>
            <person name="Cai P.R."/>
            <person name="Han B."/>
            <person name="Wang L.S."/>
        </authorList>
    </citation>
    <scope>FUNCTION</scope>
</reference>
<name>GCY21_CAEEL</name>
<evidence type="ECO:0000250" key="1">
    <source>
        <dbReference type="UniProtKB" id="Q19187"/>
    </source>
</evidence>
<evidence type="ECO:0000255" key="2"/>
<evidence type="ECO:0000255" key="3">
    <source>
        <dbReference type="PROSITE-ProRule" id="PRU00099"/>
    </source>
</evidence>
<evidence type="ECO:0000255" key="4">
    <source>
        <dbReference type="PROSITE-ProRule" id="PRU00159"/>
    </source>
</evidence>
<evidence type="ECO:0000255" key="5">
    <source>
        <dbReference type="PROSITE-ProRule" id="PRU00498"/>
    </source>
</evidence>
<evidence type="ECO:0000269" key="6">
    <source>
    </source>
</evidence>
<evidence type="ECO:0000269" key="7">
    <source>
    </source>
</evidence>
<evidence type="ECO:0000305" key="8"/>
<evidence type="ECO:0000312" key="9">
    <source>
        <dbReference type="Proteomes" id="UP000001940"/>
    </source>
</evidence>
<evidence type="ECO:0000312" key="10">
    <source>
        <dbReference type="WormBase" id="F22E5.3"/>
    </source>
</evidence>
<sequence>MLSAVLLLLFFIQNVQNFDKIELEDITVYFPLKVDYLAPFGCATGTKCDDEGAAYIPSAMEIAINRLNADKDLEVFHDLDVNYVDTSKTAGPRAARTAALNNGTIAALGLMRDCYIQSTILNINSKIAVSDVCEMDLSSVKGFDQTSVLMNSQTNSLAKSVMYFLDKYQWKKVALVSPSTVLTAFATRVRSDLLDALTANKIDILVDSRLDPMSDITDKVKEDAEKARIFIICDWSSNANLLRNYLFKLGEMNKMQSGEYFVLGYISYDTNYQWLEASSGDQRLVHLGASDINDYNLTENDLHEVYKNVVILSDGPPPAEPNSTWEDIKSQVLMKKPAKMCPPYCNTTVSEKITPRWDRIKLLFDSIQYLADATNDALNIGANIYQSDIFYEYLISRKIDSVTGVTEFIDGYGAIVGSIQIYYHFSSSSHNSYSLFPCARLAQSSLLNTVWSLTDYSEGLSIDFVNKSAPKDTPVCGFYGENCGPPANNTFIIVISVGVAVLIGLAIAAAFLYKRYRYERRLHSLFFMIDRNQIILKKHTNLMSQQSLRSMASIHGSVVAASQTLRDSHFFIEDYNNASSINASSIFNTGSTARAGPFGPIPGFGGVTGASEDEKWHQIPDFGVGLYEGRTVALKRIYRSDVEFTRSIRLEIAKLQESVNSNVIEFVGMVVQSPDVFVVYELAQRGSLKDILDNDDMPLDDVFRSQMTKDIIAGLEYLHSSPIGCHGRLKSTNCLIDARWMVRLSSFGLRELRGEETWQQEDDVQEGKDQLWTSPELLRWSTGLSQCGVLLVQKSDVYSLAIVLYELFGRLGPWGDEPMEPREIVSLVKREALAGKKPFRPDMAVLKESPRIVQETVVAAWTEDPLNRPSLHQIKRKLKPLTIGLKRTIMDNMVSMIEKYTDKLEKDIAERNEELEGEKAKSEALLKMMLPEVVADSLKLGSNVSAESFENCTVFFSDCPGFVEMSATSKPIDIVQFLNDLYTVFDRIIDQFDVYKVETIADAYMVASGLPVPNGNHHAGEIASLGLALLKAVESFKIRHLPNEKVRLRIGMNSGPCVAGVVGLKMPRYCLFGDTVNTASRMESNGIPLRINCSGTAKEILDQLGGYEIEERGIVEMKGKGKQMTYFVRGENSDMRRERIIRERVKFASLKKAQIQEKTYEFS</sequence>